<gene>
    <name evidence="1" type="primary">fusA</name>
    <name type="ordered locus">Ppha_0286</name>
</gene>
<protein>
    <recommendedName>
        <fullName evidence="1">Elongation factor G</fullName>
        <shortName evidence="1">EF-G</shortName>
    </recommendedName>
</protein>
<organism>
    <name type="scientific">Pelodictyon phaeoclathratiforme (strain DSM 5477 / BU-1)</name>
    <dbReference type="NCBI Taxonomy" id="324925"/>
    <lineage>
        <taxon>Bacteria</taxon>
        <taxon>Pseudomonadati</taxon>
        <taxon>Chlorobiota</taxon>
        <taxon>Chlorobiia</taxon>
        <taxon>Chlorobiales</taxon>
        <taxon>Chlorobiaceae</taxon>
        <taxon>Chlorobium/Pelodictyon group</taxon>
        <taxon>Pelodictyon</taxon>
    </lineage>
</organism>
<keyword id="KW-0963">Cytoplasm</keyword>
<keyword id="KW-0251">Elongation factor</keyword>
<keyword id="KW-0342">GTP-binding</keyword>
<keyword id="KW-0547">Nucleotide-binding</keyword>
<keyword id="KW-0648">Protein biosynthesis</keyword>
<keyword id="KW-1185">Reference proteome</keyword>
<sequence>MARLVDLDKVRNIGIMAHIDAGKTTTTERILYYTGRLHRMGEVHDGGATMDWMDQEKERGITITSAATTCFWMPKFGNYIGVNHRINIIDTPGHVDFTVEVERSLRVLDGAVALFCAVGGVEPQSETVWRQANKYGVPRIAYINKMDRTGANFFETVKAIRERLGANPVPLQIPIGEGEIFAGFVDLIRMKGIIYNKEDGSTYDEVEIPHDLQNEARTWRINMLEAVSEHDDTLLEKYLNGEDITESEVRNVLRQATLKVTIIPVLCGSSFKNKGVQFMLDAVVEYLASPVDVGAVEGHHPRTEEPVTREPKDEEPFAALAFKIATDPFVGKLTFFRVYSGVLKAGSYVLNTMTGKKERIGRVLQMHSNKREDIDCVYCGDIAAAVGLKDVRTGDTLCDENSPVVLEKMVFPEPVIEIAIEPKTKSDSDRLGMSLAKLAEEDPTFKVKTDDETGQTLIAGMGELHLEILVDRLKREFKVEANVGKPQVAYRETIRKSVEFEGKFVRQSGGKGQFGLVVLRVEPLEEGKGYEFVDAVKGGVIPREYIPAVNAGVQQAMKSGVVAGFPMQDIKVTLLDGKYHEVDSSEMAFKIAGSIGFKGGAKKADPVLLEPIMKVEVVTPDEYLGDVMGDLSSRRGHIEGMGQRAGAQFVNAKVPLSAMFGYSTDLRSMSQGRANYSMEFDCYREVPRSIAEALQEKRTSKDSD</sequence>
<evidence type="ECO:0000255" key="1">
    <source>
        <dbReference type="HAMAP-Rule" id="MF_00054"/>
    </source>
</evidence>
<comment type="function">
    <text evidence="1">Catalyzes the GTP-dependent ribosomal translocation step during translation elongation. During this step, the ribosome changes from the pre-translocational (PRE) to the post-translocational (POST) state as the newly formed A-site-bound peptidyl-tRNA and P-site-bound deacylated tRNA move to the P and E sites, respectively. Catalyzes the coordinated movement of the two tRNA molecules, the mRNA and conformational changes in the ribosome.</text>
</comment>
<comment type="subcellular location">
    <subcellularLocation>
        <location evidence="1">Cytoplasm</location>
    </subcellularLocation>
</comment>
<comment type="similarity">
    <text evidence="1">Belongs to the TRAFAC class translation factor GTPase superfamily. Classic translation factor GTPase family. EF-G/EF-2 subfamily.</text>
</comment>
<name>EFG_PELPB</name>
<reference key="1">
    <citation type="submission" date="2008-06" db="EMBL/GenBank/DDBJ databases">
        <title>Complete sequence of Pelodictyon phaeoclathratiforme BU-1.</title>
        <authorList>
            <consortium name="US DOE Joint Genome Institute"/>
            <person name="Lucas S."/>
            <person name="Copeland A."/>
            <person name="Lapidus A."/>
            <person name="Glavina del Rio T."/>
            <person name="Dalin E."/>
            <person name="Tice H."/>
            <person name="Bruce D."/>
            <person name="Goodwin L."/>
            <person name="Pitluck S."/>
            <person name="Schmutz J."/>
            <person name="Larimer F."/>
            <person name="Land M."/>
            <person name="Hauser L."/>
            <person name="Kyrpides N."/>
            <person name="Mikhailova N."/>
            <person name="Liu Z."/>
            <person name="Li T."/>
            <person name="Zhao F."/>
            <person name="Overmann J."/>
            <person name="Bryant D.A."/>
            <person name="Richardson P."/>
        </authorList>
    </citation>
    <scope>NUCLEOTIDE SEQUENCE [LARGE SCALE GENOMIC DNA]</scope>
    <source>
        <strain>DSM 5477 / BU-1</strain>
    </source>
</reference>
<feature type="chain" id="PRO_1000091744" description="Elongation factor G">
    <location>
        <begin position="1"/>
        <end position="704"/>
    </location>
</feature>
<feature type="domain" description="tr-type G">
    <location>
        <begin position="8"/>
        <end position="291"/>
    </location>
</feature>
<feature type="binding site" evidence="1">
    <location>
        <begin position="17"/>
        <end position="24"/>
    </location>
    <ligand>
        <name>GTP</name>
        <dbReference type="ChEBI" id="CHEBI:37565"/>
    </ligand>
</feature>
<feature type="binding site" evidence="1">
    <location>
        <begin position="90"/>
        <end position="94"/>
    </location>
    <ligand>
        <name>GTP</name>
        <dbReference type="ChEBI" id="CHEBI:37565"/>
    </ligand>
</feature>
<feature type="binding site" evidence="1">
    <location>
        <begin position="144"/>
        <end position="147"/>
    </location>
    <ligand>
        <name>GTP</name>
        <dbReference type="ChEBI" id="CHEBI:37565"/>
    </ligand>
</feature>
<dbReference type="EMBL" id="CP001110">
    <property type="protein sequence ID" value="ACF42619.1"/>
    <property type="molecule type" value="Genomic_DNA"/>
</dbReference>
<dbReference type="RefSeq" id="WP_012507115.1">
    <property type="nucleotide sequence ID" value="NC_011060.1"/>
</dbReference>
<dbReference type="SMR" id="B4SBU4"/>
<dbReference type="STRING" id="324925.Ppha_0286"/>
<dbReference type="KEGG" id="pph:Ppha_0286"/>
<dbReference type="eggNOG" id="COG0480">
    <property type="taxonomic scope" value="Bacteria"/>
</dbReference>
<dbReference type="HOGENOM" id="CLU_002794_4_1_10"/>
<dbReference type="OrthoDB" id="9801591at2"/>
<dbReference type="Proteomes" id="UP000002724">
    <property type="component" value="Chromosome"/>
</dbReference>
<dbReference type="GO" id="GO:0005737">
    <property type="term" value="C:cytoplasm"/>
    <property type="evidence" value="ECO:0007669"/>
    <property type="project" value="UniProtKB-SubCell"/>
</dbReference>
<dbReference type="GO" id="GO:0005525">
    <property type="term" value="F:GTP binding"/>
    <property type="evidence" value="ECO:0007669"/>
    <property type="project" value="UniProtKB-UniRule"/>
</dbReference>
<dbReference type="GO" id="GO:0003924">
    <property type="term" value="F:GTPase activity"/>
    <property type="evidence" value="ECO:0007669"/>
    <property type="project" value="InterPro"/>
</dbReference>
<dbReference type="GO" id="GO:0003746">
    <property type="term" value="F:translation elongation factor activity"/>
    <property type="evidence" value="ECO:0007669"/>
    <property type="project" value="UniProtKB-UniRule"/>
</dbReference>
<dbReference type="GO" id="GO:0032790">
    <property type="term" value="P:ribosome disassembly"/>
    <property type="evidence" value="ECO:0007669"/>
    <property type="project" value="TreeGrafter"/>
</dbReference>
<dbReference type="CDD" id="cd01886">
    <property type="entry name" value="EF-G"/>
    <property type="match status" value="1"/>
</dbReference>
<dbReference type="CDD" id="cd16262">
    <property type="entry name" value="EFG_III"/>
    <property type="match status" value="1"/>
</dbReference>
<dbReference type="CDD" id="cd01434">
    <property type="entry name" value="EFG_mtEFG1_IV"/>
    <property type="match status" value="1"/>
</dbReference>
<dbReference type="CDD" id="cd03713">
    <property type="entry name" value="EFG_mtEFG_C"/>
    <property type="match status" value="1"/>
</dbReference>
<dbReference type="CDD" id="cd04088">
    <property type="entry name" value="EFG_mtEFG_II"/>
    <property type="match status" value="1"/>
</dbReference>
<dbReference type="FunFam" id="2.40.30.10:FF:000006">
    <property type="entry name" value="Elongation factor G"/>
    <property type="match status" value="1"/>
</dbReference>
<dbReference type="FunFam" id="3.30.230.10:FF:000003">
    <property type="entry name" value="Elongation factor G"/>
    <property type="match status" value="1"/>
</dbReference>
<dbReference type="FunFam" id="3.30.70.240:FF:000001">
    <property type="entry name" value="Elongation factor G"/>
    <property type="match status" value="1"/>
</dbReference>
<dbReference type="FunFam" id="3.30.70.870:FF:000001">
    <property type="entry name" value="Elongation factor G"/>
    <property type="match status" value="1"/>
</dbReference>
<dbReference type="FunFam" id="3.40.50.300:FF:000029">
    <property type="entry name" value="Elongation factor G"/>
    <property type="match status" value="1"/>
</dbReference>
<dbReference type="Gene3D" id="3.30.230.10">
    <property type="match status" value="1"/>
</dbReference>
<dbReference type="Gene3D" id="3.30.70.240">
    <property type="match status" value="1"/>
</dbReference>
<dbReference type="Gene3D" id="3.30.70.870">
    <property type="entry name" value="Elongation Factor G (Translational Gtpase), domain 3"/>
    <property type="match status" value="1"/>
</dbReference>
<dbReference type="Gene3D" id="3.40.50.300">
    <property type="entry name" value="P-loop containing nucleotide triphosphate hydrolases"/>
    <property type="match status" value="1"/>
</dbReference>
<dbReference type="Gene3D" id="2.40.30.10">
    <property type="entry name" value="Translation factors"/>
    <property type="match status" value="1"/>
</dbReference>
<dbReference type="HAMAP" id="MF_00054_B">
    <property type="entry name" value="EF_G_EF_2_B"/>
    <property type="match status" value="1"/>
</dbReference>
<dbReference type="InterPro" id="IPR041095">
    <property type="entry name" value="EFG_II"/>
</dbReference>
<dbReference type="InterPro" id="IPR009022">
    <property type="entry name" value="EFG_III"/>
</dbReference>
<dbReference type="InterPro" id="IPR035647">
    <property type="entry name" value="EFG_III/V"/>
</dbReference>
<dbReference type="InterPro" id="IPR047872">
    <property type="entry name" value="EFG_IV"/>
</dbReference>
<dbReference type="InterPro" id="IPR035649">
    <property type="entry name" value="EFG_V"/>
</dbReference>
<dbReference type="InterPro" id="IPR000640">
    <property type="entry name" value="EFG_V-like"/>
</dbReference>
<dbReference type="InterPro" id="IPR004161">
    <property type="entry name" value="EFTu-like_2"/>
</dbReference>
<dbReference type="InterPro" id="IPR031157">
    <property type="entry name" value="G_TR_CS"/>
</dbReference>
<dbReference type="InterPro" id="IPR027417">
    <property type="entry name" value="P-loop_NTPase"/>
</dbReference>
<dbReference type="InterPro" id="IPR020568">
    <property type="entry name" value="Ribosomal_Su5_D2-typ_SF"/>
</dbReference>
<dbReference type="InterPro" id="IPR014721">
    <property type="entry name" value="Ribsml_uS5_D2-typ_fold_subgr"/>
</dbReference>
<dbReference type="InterPro" id="IPR005225">
    <property type="entry name" value="Small_GTP-bd"/>
</dbReference>
<dbReference type="InterPro" id="IPR000795">
    <property type="entry name" value="T_Tr_GTP-bd_dom"/>
</dbReference>
<dbReference type="InterPro" id="IPR009000">
    <property type="entry name" value="Transl_B-barrel_sf"/>
</dbReference>
<dbReference type="InterPro" id="IPR004540">
    <property type="entry name" value="Transl_elong_EFG/EF2"/>
</dbReference>
<dbReference type="InterPro" id="IPR005517">
    <property type="entry name" value="Transl_elong_EFG/EF2_IV"/>
</dbReference>
<dbReference type="NCBIfam" id="TIGR00484">
    <property type="entry name" value="EF-G"/>
    <property type="match status" value="1"/>
</dbReference>
<dbReference type="NCBIfam" id="NF009379">
    <property type="entry name" value="PRK12740.1-3"/>
    <property type="match status" value="1"/>
</dbReference>
<dbReference type="NCBIfam" id="NF009381">
    <property type="entry name" value="PRK12740.1-5"/>
    <property type="match status" value="1"/>
</dbReference>
<dbReference type="NCBIfam" id="TIGR00231">
    <property type="entry name" value="small_GTP"/>
    <property type="match status" value="1"/>
</dbReference>
<dbReference type="PANTHER" id="PTHR43261:SF1">
    <property type="entry name" value="RIBOSOME-RELEASING FACTOR 2, MITOCHONDRIAL"/>
    <property type="match status" value="1"/>
</dbReference>
<dbReference type="PANTHER" id="PTHR43261">
    <property type="entry name" value="TRANSLATION ELONGATION FACTOR G-RELATED"/>
    <property type="match status" value="1"/>
</dbReference>
<dbReference type="Pfam" id="PF00679">
    <property type="entry name" value="EFG_C"/>
    <property type="match status" value="1"/>
</dbReference>
<dbReference type="Pfam" id="PF14492">
    <property type="entry name" value="EFG_III"/>
    <property type="match status" value="1"/>
</dbReference>
<dbReference type="Pfam" id="PF03764">
    <property type="entry name" value="EFG_IV"/>
    <property type="match status" value="1"/>
</dbReference>
<dbReference type="Pfam" id="PF00009">
    <property type="entry name" value="GTP_EFTU"/>
    <property type="match status" value="1"/>
</dbReference>
<dbReference type="Pfam" id="PF03144">
    <property type="entry name" value="GTP_EFTU_D2"/>
    <property type="match status" value="1"/>
</dbReference>
<dbReference type="PRINTS" id="PR00315">
    <property type="entry name" value="ELONGATNFCT"/>
</dbReference>
<dbReference type="SMART" id="SM00838">
    <property type="entry name" value="EFG_C"/>
    <property type="match status" value="1"/>
</dbReference>
<dbReference type="SMART" id="SM00889">
    <property type="entry name" value="EFG_IV"/>
    <property type="match status" value="1"/>
</dbReference>
<dbReference type="SUPFAM" id="SSF54980">
    <property type="entry name" value="EF-G C-terminal domain-like"/>
    <property type="match status" value="2"/>
</dbReference>
<dbReference type="SUPFAM" id="SSF52540">
    <property type="entry name" value="P-loop containing nucleoside triphosphate hydrolases"/>
    <property type="match status" value="1"/>
</dbReference>
<dbReference type="SUPFAM" id="SSF54211">
    <property type="entry name" value="Ribosomal protein S5 domain 2-like"/>
    <property type="match status" value="1"/>
</dbReference>
<dbReference type="SUPFAM" id="SSF50447">
    <property type="entry name" value="Translation proteins"/>
    <property type="match status" value="1"/>
</dbReference>
<dbReference type="PROSITE" id="PS00301">
    <property type="entry name" value="G_TR_1"/>
    <property type="match status" value="1"/>
</dbReference>
<dbReference type="PROSITE" id="PS51722">
    <property type="entry name" value="G_TR_2"/>
    <property type="match status" value="1"/>
</dbReference>
<proteinExistence type="inferred from homology"/>
<accession>B4SBU4</accession>